<proteinExistence type="inferred from homology"/>
<dbReference type="EMBL" id="AE017356">
    <property type="protein sequence ID" value="AAW47104.1"/>
    <property type="molecule type" value="Genomic_DNA"/>
</dbReference>
<dbReference type="RefSeq" id="XP_568621.1">
    <property type="nucleotide sequence ID" value="XM_568621.1"/>
</dbReference>
<dbReference type="SMR" id="P0CR24"/>
<dbReference type="FunCoup" id="P0CR24">
    <property type="interactions" value="478"/>
</dbReference>
<dbReference type="STRING" id="214684.P0CR24"/>
<dbReference type="PaxDb" id="214684-P0CR24"/>
<dbReference type="EnsemblFungi" id="AAW47104">
    <property type="protein sequence ID" value="AAW47104"/>
    <property type="gene ID" value="CNN01500"/>
</dbReference>
<dbReference type="GeneID" id="3255436"/>
<dbReference type="KEGG" id="cne:CNN01500"/>
<dbReference type="VEuPathDB" id="FungiDB:CNN01500"/>
<dbReference type="eggNOG" id="KOG1783">
    <property type="taxonomic scope" value="Eukaryota"/>
</dbReference>
<dbReference type="HOGENOM" id="CLU_076902_7_2_1"/>
<dbReference type="InParanoid" id="P0CR24"/>
<dbReference type="OMA" id="EQTVEYV"/>
<dbReference type="OrthoDB" id="268799at2759"/>
<dbReference type="Proteomes" id="UP000002149">
    <property type="component" value="Chromosome 14"/>
</dbReference>
<dbReference type="GO" id="GO:0005730">
    <property type="term" value="C:nucleolus"/>
    <property type="evidence" value="ECO:0000318"/>
    <property type="project" value="GO_Central"/>
</dbReference>
<dbReference type="GO" id="GO:0000932">
    <property type="term" value="C:P-body"/>
    <property type="evidence" value="ECO:0000318"/>
    <property type="project" value="GO_Central"/>
</dbReference>
<dbReference type="GO" id="GO:0005732">
    <property type="term" value="C:sno(s)RNA-containing ribonucleoprotein complex"/>
    <property type="evidence" value="ECO:0000318"/>
    <property type="project" value="GO_Central"/>
</dbReference>
<dbReference type="GO" id="GO:0005681">
    <property type="term" value="C:spliceosomal complex"/>
    <property type="evidence" value="ECO:0007669"/>
    <property type="project" value="UniProtKB-KW"/>
</dbReference>
<dbReference type="GO" id="GO:0046540">
    <property type="term" value="C:U4/U6 x U5 tri-snRNP complex"/>
    <property type="evidence" value="ECO:0000318"/>
    <property type="project" value="GO_Central"/>
</dbReference>
<dbReference type="GO" id="GO:0005688">
    <property type="term" value="C:U6 snRNP"/>
    <property type="evidence" value="ECO:0000318"/>
    <property type="project" value="GO_Central"/>
</dbReference>
<dbReference type="GO" id="GO:0003723">
    <property type="term" value="F:RNA binding"/>
    <property type="evidence" value="ECO:0000318"/>
    <property type="project" value="GO_Central"/>
</dbReference>
<dbReference type="GO" id="GO:0030490">
    <property type="term" value="P:maturation of SSU-rRNA"/>
    <property type="evidence" value="ECO:0000318"/>
    <property type="project" value="GO_Central"/>
</dbReference>
<dbReference type="GO" id="GO:0000398">
    <property type="term" value="P:mRNA splicing, via spliceosome"/>
    <property type="evidence" value="ECO:0000318"/>
    <property type="project" value="GO_Central"/>
</dbReference>
<dbReference type="GO" id="GO:0008033">
    <property type="term" value="P:tRNA processing"/>
    <property type="evidence" value="ECO:0007669"/>
    <property type="project" value="UniProtKB-KW"/>
</dbReference>
<dbReference type="CDD" id="cd01726">
    <property type="entry name" value="LSm6"/>
    <property type="match status" value="1"/>
</dbReference>
<dbReference type="FunFam" id="2.30.30.100:FF:000044">
    <property type="entry name" value="Probable U6 snRNA-associated Sm-like protein LSm6"/>
    <property type="match status" value="1"/>
</dbReference>
<dbReference type="Gene3D" id="2.30.30.100">
    <property type="match status" value="1"/>
</dbReference>
<dbReference type="InterPro" id="IPR016487">
    <property type="entry name" value="Lsm6/sSmF"/>
</dbReference>
<dbReference type="InterPro" id="IPR010920">
    <property type="entry name" value="LSM_dom_sf"/>
</dbReference>
<dbReference type="InterPro" id="IPR047575">
    <property type="entry name" value="Sm"/>
</dbReference>
<dbReference type="InterPro" id="IPR001163">
    <property type="entry name" value="Sm_dom_euk/arc"/>
</dbReference>
<dbReference type="PANTHER" id="PTHR11021">
    <property type="entry name" value="SMALL NUCLEAR RIBONUCLEOPROTEIN F SNRNP-F"/>
    <property type="match status" value="1"/>
</dbReference>
<dbReference type="PANTHER" id="PTHR11021:SF1">
    <property type="entry name" value="U6 SNRNA-ASSOCIATED SM-LIKE PROTEIN LSM6"/>
    <property type="match status" value="1"/>
</dbReference>
<dbReference type="Pfam" id="PF01423">
    <property type="entry name" value="LSM"/>
    <property type="match status" value="1"/>
</dbReference>
<dbReference type="SMART" id="SM00651">
    <property type="entry name" value="Sm"/>
    <property type="match status" value="1"/>
</dbReference>
<dbReference type="SUPFAM" id="SSF50182">
    <property type="entry name" value="Sm-like ribonucleoproteins"/>
    <property type="match status" value="1"/>
</dbReference>
<dbReference type="PROSITE" id="PS52002">
    <property type="entry name" value="SM"/>
    <property type="match status" value="1"/>
</dbReference>
<feature type="chain" id="PRO_0000333595" description="U6 snRNA-associated Sm-like protein LSm6">
    <location>
        <begin position="1"/>
        <end position="88"/>
    </location>
</feature>
<feature type="domain" description="Sm" evidence="2">
    <location>
        <begin position="16"/>
        <end position="88"/>
    </location>
</feature>
<evidence type="ECO:0000250" key="1"/>
<evidence type="ECO:0000255" key="2">
    <source>
        <dbReference type="PROSITE-ProRule" id="PRU01346"/>
    </source>
</evidence>
<evidence type="ECO:0000305" key="3"/>
<organism>
    <name type="scientific">Cryptococcus neoformans var. neoformans serotype D (strain JEC21 / ATCC MYA-565)</name>
    <name type="common">Filobasidiella neoformans</name>
    <dbReference type="NCBI Taxonomy" id="214684"/>
    <lineage>
        <taxon>Eukaryota</taxon>
        <taxon>Fungi</taxon>
        <taxon>Dikarya</taxon>
        <taxon>Basidiomycota</taxon>
        <taxon>Agaricomycotina</taxon>
        <taxon>Tremellomycetes</taxon>
        <taxon>Tremellales</taxon>
        <taxon>Cryptococcaceae</taxon>
        <taxon>Cryptococcus</taxon>
        <taxon>Cryptococcus neoformans species complex</taxon>
    </lineage>
</organism>
<accession>P0CR24</accession>
<accession>Q55HH4</accession>
<accession>Q5K712</accession>
<protein>
    <recommendedName>
        <fullName>U6 snRNA-associated Sm-like protein LSm6</fullName>
    </recommendedName>
</protein>
<gene>
    <name type="primary">LSM6</name>
    <name type="ordered locus">CNN01500</name>
</gene>
<reference key="1">
    <citation type="journal article" date="2005" name="Science">
        <title>The genome of the basidiomycetous yeast and human pathogen Cryptococcus neoformans.</title>
        <authorList>
            <person name="Loftus B.J."/>
            <person name="Fung E."/>
            <person name="Roncaglia P."/>
            <person name="Rowley D."/>
            <person name="Amedeo P."/>
            <person name="Bruno D."/>
            <person name="Vamathevan J."/>
            <person name="Miranda M."/>
            <person name="Anderson I.J."/>
            <person name="Fraser J.A."/>
            <person name="Allen J.E."/>
            <person name="Bosdet I.E."/>
            <person name="Brent M.R."/>
            <person name="Chiu R."/>
            <person name="Doering T.L."/>
            <person name="Donlin M.J."/>
            <person name="D'Souza C.A."/>
            <person name="Fox D.S."/>
            <person name="Grinberg V."/>
            <person name="Fu J."/>
            <person name="Fukushima M."/>
            <person name="Haas B.J."/>
            <person name="Huang J.C."/>
            <person name="Janbon G."/>
            <person name="Jones S.J.M."/>
            <person name="Koo H.L."/>
            <person name="Krzywinski M.I."/>
            <person name="Kwon-Chung K.J."/>
            <person name="Lengeler K.B."/>
            <person name="Maiti R."/>
            <person name="Marra M.A."/>
            <person name="Marra R.E."/>
            <person name="Mathewson C.A."/>
            <person name="Mitchell T.G."/>
            <person name="Pertea M."/>
            <person name="Riggs F.R."/>
            <person name="Salzberg S.L."/>
            <person name="Schein J.E."/>
            <person name="Shvartsbeyn A."/>
            <person name="Shin H."/>
            <person name="Shumway M."/>
            <person name="Specht C.A."/>
            <person name="Suh B.B."/>
            <person name="Tenney A."/>
            <person name="Utterback T.R."/>
            <person name="Wickes B.L."/>
            <person name="Wortman J.R."/>
            <person name="Wye N.H."/>
            <person name="Kronstad J.W."/>
            <person name="Lodge J.K."/>
            <person name="Heitman J."/>
            <person name="Davis R.W."/>
            <person name="Fraser C.M."/>
            <person name="Hyman R.W."/>
        </authorList>
    </citation>
    <scope>NUCLEOTIDE SEQUENCE [LARGE SCALE GENOMIC DNA]</scope>
    <source>
        <strain>JEC21 / ATCC MYA-565</strain>
    </source>
</reference>
<sequence>MSSPEPQGEPQPVSGSPSEFLRNIVGKRVKVRIGSGVDYTGLLTCLDGYMNVALEQAEEWAGEVKTAAYGDCFLRGNNVLYISALEDL</sequence>
<comment type="function">
    <text evidence="1">Component of LSm protein complexes, which are involved in RNA processing and may function in a chaperone-like manner, facilitating the efficient association of RNA processing factors with their substrates. Component of the cytoplasmic LSM1-LSM7 complex, which is thought to be involved in mRNA degradation by activating the decapping step in the 5'-to-3' mRNA decay pathway. Component of the nuclear LSM2-LSM8 complex, which is involved in splicing of nuclear mRNAs. LSM2-LSM8 associates with multiple snRNP complexes containing the U6 snRNA (U4/U6 di-snRNP, spliceosomal U4/U6.U5 tri-snRNP, and free U6 snRNP). It binds directly to the 3'-terminal U-tract of U6 snRNA and plays a role in the biogenesis and stability of the U6 snRNP and U4/U6 snRNP complexes. LSM2-LSM8 probably also is involved degradation of nuclear pre-mRNA by targeting them for decapping, and in processing of pre-tRNAs, pre-rRNAs and U3 snoRNA (By similarity).</text>
</comment>
<comment type="subunit">
    <text evidence="1">Component of the heptameric LSM1-LSM7 complex, which consists of LSM1, LSM2, LSM3, LSM4, LSM5, LSM6 and LSM7. Component of the heptameric LSM2-LSM8 complex, which consists of LSM2, LSM3, LSM4, LSM5, LSM6, LSM7 and LSM8. The LSm subunits form a seven-membered ring structure with a doughnut shape (By similarity).</text>
</comment>
<comment type="subcellular location">
    <subcellularLocation>
        <location evidence="1">Cytoplasm</location>
    </subcellularLocation>
    <subcellularLocation>
        <location evidence="1">Nucleus</location>
    </subcellularLocation>
</comment>
<comment type="similarity">
    <text evidence="3">Belongs to the snRNP Sm proteins family. SmF/LSm6 subfamily.</text>
</comment>
<name>LSM6_CRYNJ</name>
<keyword id="KW-0963">Cytoplasm</keyword>
<keyword id="KW-0507">mRNA processing</keyword>
<keyword id="KW-0508">mRNA splicing</keyword>
<keyword id="KW-0539">Nucleus</keyword>
<keyword id="KW-1185">Reference proteome</keyword>
<keyword id="KW-0687">Ribonucleoprotein</keyword>
<keyword id="KW-0694">RNA-binding</keyword>
<keyword id="KW-0698">rRNA processing</keyword>
<keyword id="KW-0747">Spliceosome</keyword>
<keyword id="KW-0819">tRNA processing</keyword>